<dbReference type="EC" id="2.7.3.9" evidence="1"/>
<dbReference type="EMBL" id="AE000783">
    <property type="protein sequence ID" value="AAC66921.1"/>
    <property type="molecule type" value="Genomic_DNA"/>
</dbReference>
<dbReference type="PIR" id="E70169">
    <property type="entry name" value="E70169"/>
</dbReference>
<dbReference type="RefSeq" id="NP_212692.1">
    <property type="nucleotide sequence ID" value="NC_001318.1"/>
</dbReference>
<dbReference type="SMR" id="O51508"/>
<dbReference type="STRING" id="224326.BB_0558"/>
<dbReference type="PaxDb" id="224326-BB_0558"/>
<dbReference type="EnsemblBacteria" id="AAC66921">
    <property type="protein sequence ID" value="AAC66921"/>
    <property type="gene ID" value="BB_0558"/>
</dbReference>
<dbReference type="KEGG" id="bbu:BB_0558"/>
<dbReference type="PATRIC" id="fig|224326.49.peg.949"/>
<dbReference type="HOGENOM" id="CLU_007308_7_0_12"/>
<dbReference type="OrthoDB" id="9765468at2"/>
<dbReference type="Proteomes" id="UP000001807">
    <property type="component" value="Chromosome"/>
</dbReference>
<dbReference type="GO" id="GO:0005737">
    <property type="term" value="C:cytoplasm"/>
    <property type="evidence" value="ECO:0007669"/>
    <property type="project" value="UniProtKB-SubCell"/>
</dbReference>
<dbReference type="GO" id="GO:0016301">
    <property type="term" value="F:kinase activity"/>
    <property type="evidence" value="ECO:0007669"/>
    <property type="project" value="UniProtKB-KW"/>
</dbReference>
<dbReference type="GO" id="GO:0046872">
    <property type="term" value="F:metal ion binding"/>
    <property type="evidence" value="ECO:0007669"/>
    <property type="project" value="UniProtKB-KW"/>
</dbReference>
<dbReference type="GO" id="GO:0008965">
    <property type="term" value="F:phosphoenolpyruvate-protein phosphotransferase activity"/>
    <property type="evidence" value="ECO:0007669"/>
    <property type="project" value="UniProtKB-EC"/>
</dbReference>
<dbReference type="GO" id="GO:0009401">
    <property type="term" value="P:phosphoenolpyruvate-dependent sugar phosphotransferase system"/>
    <property type="evidence" value="ECO:0007669"/>
    <property type="project" value="UniProtKB-KW"/>
</dbReference>
<dbReference type="Gene3D" id="3.20.20.60">
    <property type="entry name" value="Phosphoenolpyruvate-binding domains"/>
    <property type="match status" value="1"/>
</dbReference>
<dbReference type="Gene3D" id="3.50.30.10">
    <property type="entry name" value="Phosphohistidine domain"/>
    <property type="match status" value="1"/>
</dbReference>
<dbReference type="Gene3D" id="1.10.274.10">
    <property type="entry name" value="PtsI, HPr-binding domain"/>
    <property type="match status" value="1"/>
</dbReference>
<dbReference type="InterPro" id="IPR008279">
    <property type="entry name" value="PEP-util_enz_mobile_dom"/>
</dbReference>
<dbReference type="InterPro" id="IPR050499">
    <property type="entry name" value="PEP-utilizing_PTS_enzyme"/>
</dbReference>
<dbReference type="InterPro" id="IPR018274">
    <property type="entry name" value="PEP_util_AS"/>
</dbReference>
<dbReference type="InterPro" id="IPR000121">
    <property type="entry name" value="PEP_util_C"/>
</dbReference>
<dbReference type="InterPro" id="IPR023151">
    <property type="entry name" value="PEP_util_CS"/>
</dbReference>
<dbReference type="InterPro" id="IPR036637">
    <property type="entry name" value="Phosphohistidine_dom_sf"/>
</dbReference>
<dbReference type="InterPro" id="IPR024692">
    <property type="entry name" value="PTS_EI"/>
</dbReference>
<dbReference type="InterPro" id="IPR006318">
    <property type="entry name" value="PTS_EI-like"/>
</dbReference>
<dbReference type="InterPro" id="IPR008731">
    <property type="entry name" value="PTS_EIN"/>
</dbReference>
<dbReference type="InterPro" id="IPR036618">
    <property type="entry name" value="PtsI_HPr-bd_sf"/>
</dbReference>
<dbReference type="InterPro" id="IPR015813">
    <property type="entry name" value="Pyrv/PenolPyrv_kinase-like_dom"/>
</dbReference>
<dbReference type="InterPro" id="IPR040442">
    <property type="entry name" value="Pyrv_kinase-like_dom_sf"/>
</dbReference>
<dbReference type="NCBIfam" id="TIGR01417">
    <property type="entry name" value="PTS_I_fam"/>
    <property type="match status" value="1"/>
</dbReference>
<dbReference type="PANTHER" id="PTHR46244:SF4">
    <property type="entry name" value="MULTIPHOSPHORYL TRANSFER PROTEIN 1-RELATED"/>
    <property type="match status" value="1"/>
</dbReference>
<dbReference type="PANTHER" id="PTHR46244">
    <property type="entry name" value="PHOSPHOENOLPYRUVATE-PROTEIN PHOSPHOTRANSFERASE"/>
    <property type="match status" value="1"/>
</dbReference>
<dbReference type="Pfam" id="PF05524">
    <property type="entry name" value="PEP-utilisers_N"/>
    <property type="match status" value="1"/>
</dbReference>
<dbReference type="Pfam" id="PF00391">
    <property type="entry name" value="PEP-utilizers"/>
    <property type="match status" value="1"/>
</dbReference>
<dbReference type="Pfam" id="PF02896">
    <property type="entry name" value="PEP-utilizers_C"/>
    <property type="match status" value="1"/>
</dbReference>
<dbReference type="PIRSF" id="PIRSF000732">
    <property type="entry name" value="PTS_enzyme_I"/>
    <property type="match status" value="1"/>
</dbReference>
<dbReference type="PRINTS" id="PR01736">
    <property type="entry name" value="PHPHTRNFRASE"/>
</dbReference>
<dbReference type="SUPFAM" id="SSF47831">
    <property type="entry name" value="Enzyme I of the PEP:sugar phosphotransferase system HPr-binding (sub)domain"/>
    <property type="match status" value="1"/>
</dbReference>
<dbReference type="SUPFAM" id="SSF51621">
    <property type="entry name" value="Phosphoenolpyruvate/pyruvate domain"/>
    <property type="match status" value="1"/>
</dbReference>
<dbReference type="SUPFAM" id="SSF52009">
    <property type="entry name" value="Phosphohistidine domain"/>
    <property type="match status" value="1"/>
</dbReference>
<dbReference type="PROSITE" id="PS00742">
    <property type="entry name" value="PEP_ENZYMES_2"/>
    <property type="match status" value="1"/>
</dbReference>
<dbReference type="PROSITE" id="PS00370">
    <property type="entry name" value="PEP_ENZYMES_PHOS_SITE"/>
    <property type="match status" value="1"/>
</dbReference>
<protein>
    <recommendedName>
        <fullName evidence="1">Phosphoenolpyruvate-protein phosphotransferase</fullName>
        <ecNumber evidence="1">2.7.3.9</ecNumber>
    </recommendedName>
    <alternativeName>
        <fullName evidence="1">Phosphotransferase system, enzyme I</fullName>
    </alternativeName>
</protein>
<comment type="function">
    <text evidence="1">General (non sugar-specific) component of the phosphoenolpyruvate-dependent sugar phosphotransferase system (sugar PTS). This major carbohydrate active-transport system catalyzes the phosphorylation of incoming sugar substrates concomitantly with their translocation across the cell membrane. Enzyme I transfers the phosphoryl group from phosphoenolpyruvate (PEP) to the phosphoryl carrier protein (HPr).</text>
</comment>
<comment type="catalytic activity">
    <reaction evidence="1">
        <text>L-histidyl-[protein] + phosphoenolpyruvate = N(pros)-phospho-L-histidyl-[protein] + pyruvate</text>
        <dbReference type="Rhea" id="RHEA:23880"/>
        <dbReference type="Rhea" id="RHEA-COMP:9745"/>
        <dbReference type="Rhea" id="RHEA-COMP:9746"/>
        <dbReference type="ChEBI" id="CHEBI:15361"/>
        <dbReference type="ChEBI" id="CHEBI:29979"/>
        <dbReference type="ChEBI" id="CHEBI:58702"/>
        <dbReference type="ChEBI" id="CHEBI:64837"/>
        <dbReference type="EC" id="2.7.3.9"/>
    </reaction>
</comment>
<comment type="cofactor">
    <cofactor evidence="1">
        <name>Mg(2+)</name>
        <dbReference type="ChEBI" id="CHEBI:18420"/>
    </cofactor>
</comment>
<comment type="subunit">
    <text evidence="1">Homodimer.</text>
</comment>
<comment type="subcellular location">
    <subcellularLocation>
        <location evidence="3">Cytoplasm</location>
    </subcellularLocation>
</comment>
<comment type="domain">
    <text evidence="1">The N-terminal domain contains the HPr binding site, the central domain the pyrophosphate/phosphate carrier histidine, and the C-terminal domain the pyruvate binding site.</text>
</comment>
<comment type="miscellaneous">
    <text evidence="1">The reaction takes place in three steps, mediated by a phosphocarrier histidine residue located on the surface of the central domain. The two first partial reactions are catalyzed at an active site located on the N-terminal domain, and the third partial reaction is catalyzed at an active site located on the C-terminal domain. For catalytic turnover, the central domain swivels from the concave surface of the N-terminal domain to that of the C-terminal domain.</text>
</comment>
<comment type="similarity">
    <text evidence="3">Belongs to the PEP-utilizing enzyme family.</text>
</comment>
<evidence type="ECO:0000250" key="1">
    <source>
        <dbReference type="UniProtKB" id="P08839"/>
    </source>
</evidence>
<evidence type="ECO:0000250" key="2">
    <source>
        <dbReference type="UniProtKB" id="P23533"/>
    </source>
</evidence>
<evidence type="ECO:0000305" key="3"/>
<feature type="chain" id="PRO_0000147060" description="Phosphoenolpyruvate-protein phosphotransferase">
    <location>
        <begin position="1"/>
        <end position="573"/>
    </location>
</feature>
<feature type="active site" description="Tele-phosphohistidine intermediate" evidence="1">
    <location>
        <position position="190"/>
    </location>
</feature>
<feature type="active site" description="Proton donor" evidence="1">
    <location>
        <position position="504"/>
    </location>
</feature>
<feature type="binding site" evidence="2">
    <location>
        <position position="297"/>
    </location>
    <ligand>
        <name>phosphoenolpyruvate</name>
        <dbReference type="ChEBI" id="CHEBI:58702"/>
    </ligand>
</feature>
<feature type="binding site" evidence="1">
    <location>
        <position position="334"/>
    </location>
    <ligand>
        <name>phosphoenolpyruvate</name>
        <dbReference type="ChEBI" id="CHEBI:58702"/>
    </ligand>
</feature>
<feature type="binding site" evidence="1">
    <location>
        <position position="433"/>
    </location>
    <ligand>
        <name>Mg(2+)</name>
        <dbReference type="ChEBI" id="CHEBI:18420"/>
    </ligand>
</feature>
<feature type="binding site" evidence="1">
    <location>
        <begin position="456"/>
        <end position="457"/>
    </location>
    <ligand>
        <name>phosphoenolpyruvate</name>
        <dbReference type="ChEBI" id="CHEBI:58702"/>
    </ligand>
</feature>
<feature type="binding site" evidence="1">
    <location>
        <position position="457"/>
    </location>
    <ligand>
        <name>Mg(2+)</name>
        <dbReference type="ChEBI" id="CHEBI:18420"/>
    </ligand>
</feature>
<feature type="binding site" evidence="2">
    <location>
        <position position="467"/>
    </location>
    <ligand>
        <name>phosphoenolpyruvate</name>
        <dbReference type="ChEBI" id="CHEBI:58702"/>
    </ligand>
</feature>
<keyword id="KW-0963">Cytoplasm</keyword>
<keyword id="KW-0418">Kinase</keyword>
<keyword id="KW-0460">Magnesium</keyword>
<keyword id="KW-0479">Metal-binding</keyword>
<keyword id="KW-0598">Phosphotransferase system</keyword>
<keyword id="KW-1185">Reference proteome</keyword>
<keyword id="KW-0762">Sugar transport</keyword>
<keyword id="KW-0808">Transferase</keyword>
<keyword id="KW-0813">Transport</keyword>
<proteinExistence type="inferred from homology"/>
<reference key="1">
    <citation type="journal article" date="1997" name="Nature">
        <title>Genomic sequence of a Lyme disease spirochaete, Borrelia burgdorferi.</title>
        <authorList>
            <person name="Fraser C.M."/>
            <person name="Casjens S."/>
            <person name="Huang W.M."/>
            <person name="Sutton G.G."/>
            <person name="Clayton R.A."/>
            <person name="Lathigra R."/>
            <person name="White O."/>
            <person name="Ketchum K.A."/>
            <person name="Dodson R.J."/>
            <person name="Hickey E.K."/>
            <person name="Gwinn M.L."/>
            <person name="Dougherty B.A."/>
            <person name="Tomb J.-F."/>
            <person name="Fleischmann R.D."/>
            <person name="Richardson D.L."/>
            <person name="Peterson J.D."/>
            <person name="Kerlavage A.R."/>
            <person name="Quackenbush J."/>
            <person name="Salzberg S.L."/>
            <person name="Hanson M."/>
            <person name="van Vugt R."/>
            <person name="Palmer N."/>
            <person name="Adams M.D."/>
            <person name="Gocayne J.D."/>
            <person name="Weidman J.F."/>
            <person name="Utterback T.R."/>
            <person name="Watthey L."/>
            <person name="McDonald L.A."/>
            <person name="Artiach P."/>
            <person name="Bowman C."/>
            <person name="Garland S.A."/>
            <person name="Fujii C."/>
            <person name="Cotton M.D."/>
            <person name="Horst K."/>
            <person name="Roberts K.M."/>
            <person name="Hatch B."/>
            <person name="Smith H.O."/>
            <person name="Venter J.C."/>
        </authorList>
    </citation>
    <scope>NUCLEOTIDE SEQUENCE [LARGE SCALE GENOMIC DNA]</scope>
    <source>
        <strain>ATCC 35210 / DSM 4680 / CIP 102532 / B31</strain>
    </source>
</reference>
<organism>
    <name type="scientific">Borreliella burgdorferi (strain ATCC 35210 / DSM 4680 / CIP 102532 / B31)</name>
    <name type="common">Borrelia burgdorferi</name>
    <dbReference type="NCBI Taxonomy" id="224326"/>
    <lineage>
        <taxon>Bacteria</taxon>
        <taxon>Pseudomonadati</taxon>
        <taxon>Spirochaetota</taxon>
        <taxon>Spirochaetia</taxon>
        <taxon>Spirochaetales</taxon>
        <taxon>Borreliaceae</taxon>
        <taxon>Borreliella</taxon>
    </lineage>
</organism>
<name>PT1_BORBU</name>
<gene>
    <name type="primary">ptsI</name>
    <name type="ordered locus">BB_0558</name>
</gene>
<accession>O51508</accession>
<sequence>MTLSGKRISKGIGIGEVLCIRKNFDKIISREKIDFSQVDSEISKFNKAKSKAIEALRDLERKAMLQFGDDKKGIFEGQVLIVEDDELDELVIELIVKENYSAAYSIYLAFENLVKSVEDYKDPYLKERASDYKDIRNRLISIILGQVSDFSEINKDIILVTEELTPSDTMQFDLNYVKGFLTAVGGETSHAAILARTMGLPALVMTLSDIDALKDGDKIVIDAMSSIVIKNPSSDEINLYEGKILRQVELEKELFSLKDKDAETKDGTKVFLKANIGTPVDITYVNKYGVEGIGLFRTEFLYMRSLQPPTEDEQFETYKRVIETMEKKGVVTIRTLDVGGDKEIPYLNFKKEENPFLGFRALRMYKEYEELIQAQFNAIFRASHYGKIRVMVPMLTIYEEIETIEYFVNNAKINLKSRGLPFDENLEVGCMIEVPSAALISSKLANKLKFFSIGTNDLTQYVLAVDRGNQKISNLYDKYNPAVLKLIKKVLDDGVSSGIDVSVCGELGGDDAGALLLVGLGFRSLSMIPSATLRIKYLLKKYTIMELEELANKVLNSDSKQETLSYFDKFIGD</sequence>